<comment type="function">
    <text evidence="1">May play a role in the regulation of cellular reactive oxygen species metabolism. May participate in cell growth regulation (By similarity).</text>
</comment>
<comment type="subunit">
    <text evidence="1">Interacts with UNG.</text>
</comment>
<comment type="subcellular location">
    <subcellularLocation>
        <location evidence="1">Cytoplasm</location>
    </subcellularLocation>
    <subcellularLocation>
        <location evidence="1">Mitochondrion</location>
    </subcellularLocation>
</comment>
<comment type="tissue specificity">
    <text>Expressed at high levels in stomach and also in kidney and, at low levels, in heart (at protein level). In the stomach, highly expressed in foveolar cells, parietal cells and chief cells (at protein level). In kidney, expressed in endothelial cells, mesangial and epithelial cells (parietal and visceral epithelium) around glomerulus (at protein level).</text>
</comment>
<comment type="similarity">
    <text evidence="2">Belongs to the FAM72 family.</text>
</comment>
<proteinExistence type="evidence at protein level"/>
<keyword id="KW-0963">Cytoplasm</keyword>
<keyword id="KW-0496">Mitochondrion</keyword>
<keyword id="KW-1185">Reference proteome</keyword>
<protein>
    <recommendedName>
        <fullName>Protein FAM72A</fullName>
    </recommendedName>
</protein>
<sequence length="149" mass="16684">MSTSSCSFKDRRVSILCCKFCKQVLSSRGMKAVLLADTEIDLFSTDIPPTNAVDFIGRCYFTEICKCKLKDIACLKCGNIVGYHVIVPCCSCLLSCNNGHFWMFHSQAVYGINRLDSTGVNFLLWGNLPEVEENTDEDMLDISAEECIR</sequence>
<evidence type="ECO:0000250" key="1"/>
<evidence type="ECO:0000305" key="2"/>
<feature type="chain" id="PRO_0000340255" description="Protein FAM72A">
    <location>
        <begin position="1"/>
        <end position="149"/>
    </location>
</feature>
<organism>
    <name type="scientific">Bos taurus</name>
    <name type="common">Bovine</name>
    <dbReference type="NCBI Taxonomy" id="9913"/>
    <lineage>
        <taxon>Eukaryota</taxon>
        <taxon>Metazoa</taxon>
        <taxon>Chordata</taxon>
        <taxon>Craniata</taxon>
        <taxon>Vertebrata</taxon>
        <taxon>Euteleostomi</taxon>
        <taxon>Mammalia</taxon>
        <taxon>Eutheria</taxon>
        <taxon>Laurasiatheria</taxon>
        <taxon>Artiodactyla</taxon>
        <taxon>Ruminantia</taxon>
        <taxon>Pecora</taxon>
        <taxon>Bovidae</taxon>
        <taxon>Bovinae</taxon>
        <taxon>Bos</taxon>
    </lineage>
</organism>
<name>FA72A_BOVIN</name>
<accession>A6QL50</accession>
<gene>
    <name type="primary">FAM72A</name>
</gene>
<dbReference type="EMBL" id="BC146229">
    <property type="protein sequence ID" value="AAI46230.1"/>
    <property type="molecule type" value="mRNA"/>
</dbReference>
<dbReference type="RefSeq" id="NP_001094733.1">
    <property type="nucleotide sequence ID" value="NM_001101263.1"/>
</dbReference>
<dbReference type="FunCoup" id="A6QL50">
    <property type="interactions" value="59"/>
</dbReference>
<dbReference type="STRING" id="9913.ENSBTAP00000026937"/>
<dbReference type="PaxDb" id="9913-ENSBTAP00000026937"/>
<dbReference type="Ensembl" id="ENSBTAT00000026937.6">
    <property type="protein sequence ID" value="ENSBTAP00000026937.5"/>
    <property type="gene ID" value="ENSBTAG00000020227.7"/>
</dbReference>
<dbReference type="GeneID" id="616965"/>
<dbReference type="KEGG" id="bta:616965"/>
<dbReference type="CTD" id="729533"/>
<dbReference type="VEuPathDB" id="HostDB:ENSBTAG00000020227"/>
<dbReference type="eggNOG" id="ENOG502S1HA">
    <property type="taxonomic scope" value="Eukaryota"/>
</dbReference>
<dbReference type="GeneTree" id="ENSGT00390000005106"/>
<dbReference type="HOGENOM" id="CLU_127817_0_0_1"/>
<dbReference type="InParanoid" id="A6QL50"/>
<dbReference type="OMA" id="HLWIFNS"/>
<dbReference type="OrthoDB" id="2526683at2759"/>
<dbReference type="TreeFam" id="TF329231"/>
<dbReference type="Proteomes" id="UP000009136">
    <property type="component" value="Chromosome 16"/>
</dbReference>
<dbReference type="Bgee" id="ENSBTAG00000020227">
    <property type="expression patterns" value="Expressed in oocyte and 64 other cell types or tissues"/>
</dbReference>
<dbReference type="GO" id="GO:0005829">
    <property type="term" value="C:cytosol"/>
    <property type="evidence" value="ECO:0000318"/>
    <property type="project" value="GO_Central"/>
</dbReference>
<dbReference type="GO" id="GO:0005739">
    <property type="term" value="C:mitochondrion"/>
    <property type="evidence" value="ECO:0007669"/>
    <property type="project" value="UniProtKB-SubCell"/>
</dbReference>
<dbReference type="InterPro" id="IPR026768">
    <property type="entry name" value="YPEH2ZP"/>
</dbReference>
<dbReference type="PANTHER" id="PTHR31841">
    <property type="entry name" value="PROTEIN FAM72A-RELATED"/>
    <property type="match status" value="1"/>
</dbReference>
<dbReference type="PANTHER" id="PTHR31841:SF1">
    <property type="entry name" value="PROTEIN FAM72A-RELATED"/>
    <property type="match status" value="1"/>
</dbReference>
<dbReference type="Pfam" id="PF14976">
    <property type="entry name" value="YPEH2ZP"/>
    <property type="match status" value="1"/>
</dbReference>
<reference key="1">
    <citation type="submission" date="2007-06" db="EMBL/GenBank/DDBJ databases">
        <authorList>
            <consortium name="NIH - Mammalian Gene Collection (MGC) project"/>
        </authorList>
    </citation>
    <scope>NUCLEOTIDE SEQUENCE [LARGE SCALE MRNA]</scope>
    <source>
        <strain>Hereford</strain>
        <tissue>Ascending colon</tissue>
    </source>
</reference>